<sequence length="214" mass="23734">MTGTFITFEGPDGAGKTSVLKTLIPQLEQHVRVPLHLTREPGGAKISETIREVILDPANTAMDARTEALLYAASRRQHLVEVIQPALAQGDIVVCDRFVDSSVAYQGGGREIGPDAVLKMNQFATAGLEPALTLYLDVPVQVGLDRIKSHQNERQYDRLDQESLAFHERVHDAYMTLIVDNPQRIVSIDATEPLEKVVAACFQTITRRFPELFN</sequence>
<accession>Q035W9</accession>
<name>KTHY_LACP3</name>
<keyword id="KW-0067">ATP-binding</keyword>
<keyword id="KW-0418">Kinase</keyword>
<keyword id="KW-0545">Nucleotide biosynthesis</keyword>
<keyword id="KW-0547">Nucleotide-binding</keyword>
<keyword id="KW-1185">Reference proteome</keyword>
<keyword id="KW-0808">Transferase</keyword>
<evidence type="ECO:0000255" key="1">
    <source>
        <dbReference type="HAMAP-Rule" id="MF_00165"/>
    </source>
</evidence>
<comment type="function">
    <text evidence="1">Phosphorylation of dTMP to form dTDP in both de novo and salvage pathways of dTTP synthesis.</text>
</comment>
<comment type="catalytic activity">
    <reaction evidence="1">
        <text>dTMP + ATP = dTDP + ADP</text>
        <dbReference type="Rhea" id="RHEA:13517"/>
        <dbReference type="ChEBI" id="CHEBI:30616"/>
        <dbReference type="ChEBI" id="CHEBI:58369"/>
        <dbReference type="ChEBI" id="CHEBI:63528"/>
        <dbReference type="ChEBI" id="CHEBI:456216"/>
        <dbReference type="EC" id="2.7.4.9"/>
    </reaction>
</comment>
<comment type="similarity">
    <text evidence="1">Belongs to the thymidylate kinase family.</text>
</comment>
<gene>
    <name evidence="1" type="primary">tmk</name>
    <name type="ordered locus">LSEI_2259</name>
</gene>
<proteinExistence type="inferred from homology"/>
<feature type="chain" id="PRO_1000023207" description="Thymidylate kinase">
    <location>
        <begin position="1"/>
        <end position="214"/>
    </location>
</feature>
<feature type="binding site" evidence="1">
    <location>
        <begin position="10"/>
        <end position="17"/>
    </location>
    <ligand>
        <name>ATP</name>
        <dbReference type="ChEBI" id="CHEBI:30616"/>
    </ligand>
</feature>
<reference key="1">
    <citation type="journal article" date="2006" name="Proc. Natl. Acad. Sci. U.S.A.">
        <title>Comparative genomics of the lactic acid bacteria.</title>
        <authorList>
            <person name="Makarova K.S."/>
            <person name="Slesarev A."/>
            <person name="Wolf Y.I."/>
            <person name="Sorokin A."/>
            <person name="Mirkin B."/>
            <person name="Koonin E.V."/>
            <person name="Pavlov A."/>
            <person name="Pavlova N."/>
            <person name="Karamychev V."/>
            <person name="Polouchine N."/>
            <person name="Shakhova V."/>
            <person name="Grigoriev I."/>
            <person name="Lou Y."/>
            <person name="Rohksar D."/>
            <person name="Lucas S."/>
            <person name="Huang K."/>
            <person name="Goodstein D.M."/>
            <person name="Hawkins T."/>
            <person name="Plengvidhya V."/>
            <person name="Welker D."/>
            <person name="Hughes J."/>
            <person name="Goh Y."/>
            <person name="Benson A."/>
            <person name="Baldwin K."/>
            <person name="Lee J.-H."/>
            <person name="Diaz-Muniz I."/>
            <person name="Dosti B."/>
            <person name="Smeianov V."/>
            <person name="Wechter W."/>
            <person name="Barabote R."/>
            <person name="Lorca G."/>
            <person name="Altermann E."/>
            <person name="Barrangou R."/>
            <person name="Ganesan B."/>
            <person name="Xie Y."/>
            <person name="Rawsthorne H."/>
            <person name="Tamir D."/>
            <person name="Parker C."/>
            <person name="Breidt F."/>
            <person name="Broadbent J.R."/>
            <person name="Hutkins R."/>
            <person name="O'Sullivan D."/>
            <person name="Steele J."/>
            <person name="Unlu G."/>
            <person name="Saier M.H. Jr."/>
            <person name="Klaenhammer T."/>
            <person name="Richardson P."/>
            <person name="Kozyavkin S."/>
            <person name="Weimer B.C."/>
            <person name="Mills D.A."/>
        </authorList>
    </citation>
    <scope>NUCLEOTIDE SEQUENCE [LARGE SCALE GENOMIC DNA]</scope>
    <source>
        <strain>ATCC 334 / BCRC 17002 / CCUG 31169 / CIP 107868 / KCTC 3260 / NRRL B-441</strain>
    </source>
</reference>
<dbReference type="EC" id="2.7.4.9" evidence="1"/>
<dbReference type="EMBL" id="CP000423">
    <property type="protein sequence ID" value="ABJ71003.1"/>
    <property type="molecule type" value="Genomic_DNA"/>
</dbReference>
<dbReference type="RefSeq" id="WP_003580656.1">
    <property type="nucleotide sequence ID" value="NC_008526.1"/>
</dbReference>
<dbReference type="RefSeq" id="YP_807445.1">
    <property type="nucleotide sequence ID" value="NC_008526.1"/>
</dbReference>
<dbReference type="SMR" id="Q035W9"/>
<dbReference type="STRING" id="321967.LSEI_2259"/>
<dbReference type="PaxDb" id="321967-LSEI_2259"/>
<dbReference type="KEGG" id="lca:LSEI_2259"/>
<dbReference type="PATRIC" id="fig|321967.11.peg.2222"/>
<dbReference type="HOGENOM" id="CLU_049131_0_2_9"/>
<dbReference type="Proteomes" id="UP000001651">
    <property type="component" value="Chromosome"/>
</dbReference>
<dbReference type="GO" id="GO:0005829">
    <property type="term" value="C:cytosol"/>
    <property type="evidence" value="ECO:0007669"/>
    <property type="project" value="TreeGrafter"/>
</dbReference>
<dbReference type="GO" id="GO:0005524">
    <property type="term" value="F:ATP binding"/>
    <property type="evidence" value="ECO:0007669"/>
    <property type="project" value="UniProtKB-UniRule"/>
</dbReference>
<dbReference type="GO" id="GO:0004798">
    <property type="term" value="F:dTMP kinase activity"/>
    <property type="evidence" value="ECO:0007669"/>
    <property type="project" value="UniProtKB-UniRule"/>
</dbReference>
<dbReference type="GO" id="GO:0006233">
    <property type="term" value="P:dTDP biosynthetic process"/>
    <property type="evidence" value="ECO:0007669"/>
    <property type="project" value="InterPro"/>
</dbReference>
<dbReference type="GO" id="GO:0006235">
    <property type="term" value="P:dTTP biosynthetic process"/>
    <property type="evidence" value="ECO:0007669"/>
    <property type="project" value="UniProtKB-UniRule"/>
</dbReference>
<dbReference type="GO" id="GO:0006227">
    <property type="term" value="P:dUDP biosynthetic process"/>
    <property type="evidence" value="ECO:0007669"/>
    <property type="project" value="TreeGrafter"/>
</dbReference>
<dbReference type="CDD" id="cd01672">
    <property type="entry name" value="TMPK"/>
    <property type="match status" value="1"/>
</dbReference>
<dbReference type="FunFam" id="3.40.50.300:FF:000225">
    <property type="entry name" value="Thymidylate kinase"/>
    <property type="match status" value="1"/>
</dbReference>
<dbReference type="Gene3D" id="3.40.50.300">
    <property type="entry name" value="P-loop containing nucleotide triphosphate hydrolases"/>
    <property type="match status" value="1"/>
</dbReference>
<dbReference type="HAMAP" id="MF_00165">
    <property type="entry name" value="Thymidylate_kinase"/>
    <property type="match status" value="1"/>
</dbReference>
<dbReference type="InterPro" id="IPR027417">
    <property type="entry name" value="P-loop_NTPase"/>
</dbReference>
<dbReference type="InterPro" id="IPR039430">
    <property type="entry name" value="Thymidylate_kin-like_dom"/>
</dbReference>
<dbReference type="InterPro" id="IPR018095">
    <property type="entry name" value="Thymidylate_kin_CS"/>
</dbReference>
<dbReference type="InterPro" id="IPR018094">
    <property type="entry name" value="Thymidylate_kinase"/>
</dbReference>
<dbReference type="NCBIfam" id="TIGR00041">
    <property type="entry name" value="DTMP_kinase"/>
    <property type="match status" value="1"/>
</dbReference>
<dbReference type="PANTHER" id="PTHR10344">
    <property type="entry name" value="THYMIDYLATE KINASE"/>
    <property type="match status" value="1"/>
</dbReference>
<dbReference type="PANTHER" id="PTHR10344:SF4">
    <property type="entry name" value="UMP-CMP KINASE 2, MITOCHONDRIAL"/>
    <property type="match status" value="1"/>
</dbReference>
<dbReference type="Pfam" id="PF02223">
    <property type="entry name" value="Thymidylate_kin"/>
    <property type="match status" value="1"/>
</dbReference>
<dbReference type="SUPFAM" id="SSF52540">
    <property type="entry name" value="P-loop containing nucleoside triphosphate hydrolases"/>
    <property type="match status" value="1"/>
</dbReference>
<dbReference type="PROSITE" id="PS01331">
    <property type="entry name" value="THYMIDYLATE_KINASE"/>
    <property type="match status" value="1"/>
</dbReference>
<protein>
    <recommendedName>
        <fullName evidence="1">Thymidylate kinase</fullName>
        <ecNumber evidence="1">2.7.4.9</ecNumber>
    </recommendedName>
    <alternativeName>
        <fullName evidence="1">dTMP kinase</fullName>
    </alternativeName>
</protein>
<organism>
    <name type="scientific">Lacticaseibacillus paracasei (strain ATCC 334 / BCRC 17002 / CCUG 31169 / CIP 107868 / KCTC 3260 / NRRL B-441)</name>
    <name type="common">Lactobacillus paracasei</name>
    <dbReference type="NCBI Taxonomy" id="321967"/>
    <lineage>
        <taxon>Bacteria</taxon>
        <taxon>Bacillati</taxon>
        <taxon>Bacillota</taxon>
        <taxon>Bacilli</taxon>
        <taxon>Lactobacillales</taxon>
        <taxon>Lactobacillaceae</taxon>
        <taxon>Lacticaseibacillus</taxon>
    </lineage>
</organism>